<reference key="1">
    <citation type="submission" date="2008-06" db="EMBL/GenBank/DDBJ databases">
        <title>Complete sequence of Chlorobaculum parvum NCIB 8327.</title>
        <authorList>
            <consortium name="US DOE Joint Genome Institute"/>
            <person name="Lucas S."/>
            <person name="Copeland A."/>
            <person name="Lapidus A."/>
            <person name="Glavina del Rio T."/>
            <person name="Dalin E."/>
            <person name="Tice H."/>
            <person name="Bruce D."/>
            <person name="Goodwin L."/>
            <person name="Pitluck S."/>
            <person name="Schmutz J."/>
            <person name="Larimer F."/>
            <person name="Land M."/>
            <person name="Hauser L."/>
            <person name="Kyrpides N."/>
            <person name="Mikhailova N."/>
            <person name="Zhao F."/>
            <person name="Li T."/>
            <person name="Liu Z."/>
            <person name="Overmann J."/>
            <person name="Bryant D.A."/>
            <person name="Richardson P."/>
        </authorList>
    </citation>
    <scope>NUCLEOTIDE SEQUENCE [LARGE SCALE GENOMIC DNA]</scope>
    <source>
        <strain>DSM 263 / NCIMB 8327</strain>
    </source>
</reference>
<protein>
    <recommendedName>
        <fullName evidence="1">4-hydroxy-3-methylbut-2-enyl diphosphate reductase</fullName>
        <shortName evidence="1">HMBPP reductase</shortName>
        <ecNumber evidence="1">1.17.7.4</ecNumber>
    </recommendedName>
</protein>
<dbReference type="EC" id="1.17.7.4" evidence="1"/>
<dbReference type="EMBL" id="CP001099">
    <property type="protein sequence ID" value="ACF12143.1"/>
    <property type="molecule type" value="Genomic_DNA"/>
</dbReference>
<dbReference type="RefSeq" id="WP_012502976.1">
    <property type="nucleotide sequence ID" value="NC_011027.1"/>
</dbReference>
<dbReference type="SMR" id="B3QQE0"/>
<dbReference type="STRING" id="517417.Cpar_1751"/>
<dbReference type="KEGG" id="cpc:Cpar_1751"/>
<dbReference type="eggNOG" id="COG0761">
    <property type="taxonomic scope" value="Bacteria"/>
</dbReference>
<dbReference type="HOGENOM" id="CLU_027486_0_1_10"/>
<dbReference type="OrthoDB" id="9777362at2"/>
<dbReference type="UniPathway" id="UPA00056">
    <property type="reaction ID" value="UER00097"/>
</dbReference>
<dbReference type="UniPathway" id="UPA00059">
    <property type="reaction ID" value="UER00105"/>
</dbReference>
<dbReference type="Proteomes" id="UP000008811">
    <property type="component" value="Chromosome"/>
</dbReference>
<dbReference type="GO" id="GO:0051539">
    <property type="term" value="F:4 iron, 4 sulfur cluster binding"/>
    <property type="evidence" value="ECO:0007669"/>
    <property type="project" value="UniProtKB-UniRule"/>
</dbReference>
<dbReference type="GO" id="GO:0051745">
    <property type="term" value="F:4-hydroxy-3-methylbut-2-enyl diphosphate reductase activity"/>
    <property type="evidence" value="ECO:0007669"/>
    <property type="project" value="UniProtKB-UniRule"/>
</dbReference>
<dbReference type="GO" id="GO:0046872">
    <property type="term" value="F:metal ion binding"/>
    <property type="evidence" value="ECO:0007669"/>
    <property type="project" value="UniProtKB-KW"/>
</dbReference>
<dbReference type="GO" id="GO:0050992">
    <property type="term" value="P:dimethylallyl diphosphate biosynthetic process"/>
    <property type="evidence" value="ECO:0007669"/>
    <property type="project" value="UniProtKB-UniRule"/>
</dbReference>
<dbReference type="GO" id="GO:0019288">
    <property type="term" value="P:isopentenyl diphosphate biosynthetic process, methylerythritol 4-phosphate pathway"/>
    <property type="evidence" value="ECO:0007669"/>
    <property type="project" value="UniProtKB-UniRule"/>
</dbReference>
<dbReference type="GO" id="GO:0016114">
    <property type="term" value="P:terpenoid biosynthetic process"/>
    <property type="evidence" value="ECO:0007669"/>
    <property type="project" value="UniProtKB-UniRule"/>
</dbReference>
<dbReference type="CDD" id="cd13944">
    <property type="entry name" value="lytB_ispH"/>
    <property type="match status" value="1"/>
</dbReference>
<dbReference type="Gene3D" id="3.40.50.11270">
    <property type="match status" value="1"/>
</dbReference>
<dbReference type="Gene3D" id="3.40.1010.20">
    <property type="entry name" value="4-hydroxy-3-methylbut-2-enyl diphosphate reductase, catalytic domain"/>
    <property type="match status" value="2"/>
</dbReference>
<dbReference type="HAMAP" id="MF_00191">
    <property type="entry name" value="IspH"/>
    <property type="match status" value="1"/>
</dbReference>
<dbReference type="InterPro" id="IPR003451">
    <property type="entry name" value="LytB/IspH"/>
</dbReference>
<dbReference type="NCBIfam" id="TIGR00216">
    <property type="entry name" value="ispH_lytB"/>
    <property type="match status" value="1"/>
</dbReference>
<dbReference type="NCBIfam" id="NF002187">
    <property type="entry name" value="PRK01045.1-1"/>
    <property type="match status" value="1"/>
</dbReference>
<dbReference type="PANTHER" id="PTHR30426">
    <property type="entry name" value="4-HYDROXY-3-METHYLBUT-2-ENYL DIPHOSPHATE REDUCTASE"/>
    <property type="match status" value="1"/>
</dbReference>
<dbReference type="PANTHER" id="PTHR30426:SF0">
    <property type="entry name" value="4-HYDROXY-3-METHYLBUT-2-ENYL DIPHOSPHATE REDUCTASE"/>
    <property type="match status" value="1"/>
</dbReference>
<dbReference type="Pfam" id="PF02401">
    <property type="entry name" value="LYTB"/>
    <property type="match status" value="1"/>
</dbReference>
<name>ISPH_CHLP8</name>
<sequence length="332" mass="36564">MKINLDRTSSGFCIGVQGTIHVAEEKLNQSGELYCLGDVVHNEVEVKRLEALGMETIDIPAFEELRDAEVLIRAHGEPPSTYETARRNNLAITDTTCPVVAKLQKTAKMLHQLGYQVIIYGKKIHPEVIGINGQCNDEGVVIKHPDLSDEAEIAPLDLGRKTALISQTTMDVPGFYELKKNLEKLFAEHGHRNPGTKSGEWMAVRDIDITSEKTGGRAMPELVYKDTICRQVSSRNGKLRDFALANDCIVFAAGRKSSNGQVLYSICKDANPHSYFIEDVDEIQPEWFVGENGKPVESVGICGATSTPMWLLEKVANYIGKTFGDDSGNPDA</sequence>
<comment type="function">
    <text evidence="1">Catalyzes the conversion of 1-hydroxy-2-methyl-2-(E)-butenyl 4-diphosphate (HMBPP) into a mixture of isopentenyl diphosphate (IPP) and dimethylallyl diphosphate (DMAPP). Acts in the terminal step of the DOXP/MEP pathway for isoprenoid precursor biosynthesis.</text>
</comment>
<comment type="catalytic activity">
    <reaction evidence="1">
        <text>isopentenyl diphosphate + 2 oxidized [2Fe-2S]-[ferredoxin] + H2O = (2E)-4-hydroxy-3-methylbut-2-enyl diphosphate + 2 reduced [2Fe-2S]-[ferredoxin] + 2 H(+)</text>
        <dbReference type="Rhea" id="RHEA:24488"/>
        <dbReference type="Rhea" id="RHEA-COMP:10000"/>
        <dbReference type="Rhea" id="RHEA-COMP:10001"/>
        <dbReference type="ChEBI" id="CHEBI:15377"/>
        <dbReference type="ChEBI" id="CHEBI:15378"/>
        <dbReference type="ChEBI" id="CHEBI:33737"/>
        <dbReference type="ChEBI" id="CHEBI:33738"/>
        <dbReference type="ChEBI" id="CHEBI:128753"/>
        <dbReference type="ChEBI" id="CHEBI:128769"/>
        <dbReference type="EC" id="1.17.7.4"/>
    </reaction>
</comment>
<comment type="catalytic activity">
    <reaction evidence="1">
        <text>dimethylallyl diphosphate + 2 oxidized [2Fe-2S]-[ferredoxin] + H2O = (2E)-4-hydroxy-3-methylbut-2-enyl diphosphate + 2 reduced [2Fe-2S]-[ferredoxin] + 2 H(+)</text>
        <dbReference type="Rhea" id="RHEA:24825"/>
        <dbReference type="Rhea" id="RHEA-COMP:10000"/>
        <dbReference type="Rhea" id="RHEA-COMP:10001"/>
        <dbReference type="ChEBI" id="CHEBI:15377"/>
        <dbReference type="ChEBI" id="CHEBI:15378"/>
        <dbReference type="ChEBI" id="CHEBI:33737"/>
        <dbReference type="ChEBI" id="CHEBI:33738"/>
        <dbReference type="ChEBI" id="CHEBI:57623"/>
        <dbReference type="ChEBI" id="CHEBI:128753"/>
        <dbReference type="EC" id="1.17.7.4"/>
    </reaction>
</comment>
<comment type="cofactor">
    <cofactor evidence="1">
        <name>[4Fe-4S] cluster</name>
        <dbReference type="ChEBI" id="CHEBI:49883"/>
    </cofactor>
    <text evidence="1">Binds 1 [4Fe-4S] cluster per subunit.</text>
</comment>
<comment type="pathway">
    <text evidence="1">Isoprenoid biosynthesis; dimethylallyl diphosphate biosynthesis; dimethylallyl diphosphate from (2E)-4-hydroxy-3-methylbutenyl diphosphate: step 1/1.</text>
</comment>
<comment type="pathway">
    <text evidence="1">Isoprenoid biosynthesis; isopentenyl diphosphate biosynthesis via DXP pathway; isopentenyl diphosphate from 1-deoxy-D-xylulose 5-phosphate: step 6/6.</text>
</comment>
<comment type="similarity">
    <text evidence="1">Belongs to the IspH family.</text>
</comment>
<keyword id="KW-0004">4Fe-4S</keyword>
<keyword id="KW-0408">Iron</keyword>
<keyword id="KW-0411">Iron-sulfur</keyword>
<keyword id="KW-0414">Isoprene biosynthesis</keyword>
<keyword id="KW-0479">Metal-binding</keyword>
<keyword id="KW-0560">Oxidoreductase</keyword>
<proteinExistence type="inferred from homology"/>
<accession>B3QQE0</accession>
<organism>
    <name type="scientific">Chlorobaculum parvum (strain DSM 263 / NCIMB 8327)</name>
    <name type="common">Chlorobium vibrioforme subsp. thiosulfatophilum</name>
    <dbReference type="NCBI Taxonomy" id="517417"/>
    <lineage>
        <taxon>Bacteria</taxon>
        <taxon>Pseudomonadati</taxon>
        <taxon>Chlorobiota</taxon>
        <taxon>Chlorobiia</taxon>
        <taxon>Chlorobiales</taxon>
        <taxon>Chlorobiaceae</taxon>
        <taxon>Chlorobaculum</taxon>
    </lineage>
</organism>
<feature type="chain" id="PRO_1000098937" description="4-hydroxy-3-methylbut-2-enyl diphosphate reductase">
    <location>
        <begin position="1"/>
        <end position="332"/>
    </location>
</feature>
<feature type="active site" description="Proton donor" evidence="1">
    <location>
        <position position="127"/>
    </location>
</feature>
<feature type="binding site" evidence="1">
    <location>
        <position position="13"/>
    </location>
    <ligand>
        <name>[4Fe-4S] cluster</name>
        <dbReference type="ChEBI" id="CHEBI:49883"/>
    </ligand>
</feature>
<feature type="binding site" evidence="1">
    <location>
        <position position="41"/>
    </location>
    <ligand>
        <name>(2E)-4-hydroxy-3-methylbut-2-enyl diphosphate</name>
        <dbReference type="ChEBI" id="CHEBI:128753"/>
    </ligand>
</feature>
<feature type="binding site" evidence="1">
    <location>
        <position position="41"/>
    </location>
    <ligand>
        <name>dimethylallyl diphosphate</name>
        <dbReference type="ChEBI" id="CHEBI:57623"/>
    </ligand>
</feature>
<feature type="binding site" evidence="1">
    <location>
        <position position="41"/>
    </location>
    <ligand>
        <name>isopentenyl diphosphate</name>
        <dbReference type="ChEBI" id="CHEBI:128769"/>
    </ligand>
</feature>
<feature type="binding site" evidence="1">
    <location>
        <position position="75"/>
    </location>
    <ligand>
        <name>(2E)-4-hydroxy-3-methylbut-2-enyl diphosphate</name>
        <dbReference type="ChEBI" id="CHEBI:128753"/>
    </ligand>
</feature>
<feature type="binding site" evidence="1">
    <location>
        <position position="75"/>
    </location>
    <ligand>
        <name>dimethylallyl diphosphate</name>
        <dbReference type="ChEBI" id="CHEBI:57623"/>
    </ligand>
</feature>
<feature type="binding site" evidence="1">
    <location>
        <position position="75"/>
    </location>
    <ligand>
        <name>isopentenyl diphosphate</name>
        <dbReference type="ChEBI" id="CHEBI:128769"/>
    </ligand>
</feature>
<feature type="binding site" evidence="1">
    <location>
        <position position="97"/>
    </location>
    <ligand>
        <name>[4Fe-4S] cluster</name>
        <dbReference type="ChEBI" id="CHEBI:49883"/>
    </ligand>
</feature>
<feature type="binding site" evidence="1">
    <location>
        <position position="125"/>
    </location>
    <ligand>
        <name>(2E)-4-hydroxy-3-methylbut-2-enyl diphosphate</name>
        <dbReference type="ChEBI" id="CHEBI:128753"/>
    </ligand>
</feature>
<feature type="binding site" evidence="1">
    <location>
        <position position="125"/>
    </location>
    <ligand>
        <name>dimethylallyl diphosphate</name>
        <dbReference type="ChEBI" id="CHEBI:57623"/>
    </ligand>
</feature>
<feature type="binding site" evidence="1">
    <location>
        <position position="125"/>
    </location>
    <ligand>
        <name>isopentenyl diphosphate</name>
        <dbReference type="ChEBI" id="CHEBI:128769"/>
    </ligand>
</feature>
<feature type="binding site" evidence="1">
    <location>
        <position position="168"/>
    </location>
    <ligand>
        <name>(2E)-4-hydroxy-3-methylbut-2-enyl diphosphate</name>
        <dbReference type="ChEBI" id="CHEBI:128753"/>
    </ligand>
</feature>
<feature type="binding site" evidence="1">
    <location>
        <position position="229"/>
    </location>
    <ligand>
        <name>[4Fe-4S] cluster</name>
        <dbReference type="ChEBI" id="CHEBI:49883"/>
    </ligand>
</feature>
<feature type="binding site" evidence="1">
    <location>
        <position position="257"/>
    </location>
    <ligand>
        <name>(2E)-4-hydroxy-3-methylbut-2-enyl diphosphate</name>
        <dbReference type="ChEBI" id="CHEBI:128753"/>
    </ligand>
</feature>
<feature type="binding site" evidence="1">
    <location>
        <position position="257"/>
    </location>
    <ligand>
        <name>dimethylallyl diphosphate</name>
        <dbReference type="ChEBI" id="CHEBI:57623"/>
    </ligand>
</feature>
<feature type="binding site" evidence="1">
    <location>
        <position position="257"/>
    </location>
    <ligand>
        <name>isopentenyl diphosphate</name>
        <dbReference type="ChEBI" id="CHEBI:128769"/>
    </ligand>
</feature>
<feature type="binding site" evidence="1">
    <location>
        <position position="258"/>
    </location>
    <ligand>
        <name>(2E)-4-hydroxy-3-methylbut-2-enyl diphosphate</name>
        <dbReference type="ChEBI" id="CHEBI:128753"/>
    </ligand>
</feature>
<feature type="binding site" evidence="1">
    <location>
        <position position="258"/>
    </location>
    <ligand>
        <name>dimethylallyl diphosphate</name>
        <dbReference type="ChEBI" id="CHEBI:57623"/>
    </ligand>
</feature>
<feature type="binding site" evidence="1">
    <location>
        <position position="258"/>
    </location>
    <ligand>
        <name>isopentenyl diphosphate</name>
        <dbReference type="ChEBI" id="CHEBI:128769"/>
    </ligand>
</feature>
<feature type="binding site" evidence="1">
    <location>
        <position position="259"/>
    </location>
    <ligand>
        <name>(2E)-4-hydroxy-3-methylbut-2-enyl diphosphate</name>
        <dbReference type="ChEBI" id="CHEBI:128753"/>
    </ligand>
</feature>
<feature type="binding site" evidence="1">
    <location>
        <position position="259"/>
    </location>
    <ligand>
        <name>dimethylallyl diphosphate</name>
        <dbReference type="ChEBI" id="CHEBI:57623"/>
    </ligand>
</feature>
<feature type="binding site" evidence="1">
    <location>
        <position position="259"/>
    </location>
    <ligand>
        <name>isopentenyl diphosphate</name>
        <dbReference type="ChEBI" id="CHEBI:128769"/>
    </ligand>
</feature>
<feature type="binding site" evidence="1">
    <location>
        <position position="306"/>
    </location>
    <ligand>
        <name>(2E)-4-hydroxy-3-methylbut-2-enyl diphosphate</name>
        <dbReference type="ChEBI" id="CHEBI:128753"/>
    </ligand>
</feature>
<feature type="binding site" evidence="1">
    <location>
        <position position="306"/>
    </location>
    <ligand>
        <name>dimethylallyl diphosphate</name>
        <dbReference type="ChEBI" id="CHEBI:57623"/>
    </ligand>
</feature>
<feature type="binding site" evidence="1">
    <location>
        <position position="306"/>
    </location>
    <ligand>
        <name>isopentenyl diphosphate</name>
        <dbReference type="ChEBI" id="CHEBI:128769"/>
    </ligand>
</feature>
<gene>
    <name evidence="1" type="primary">ispH</name>
    <name type="ordered locus">Cpar_1751</name>
</gene>
<evidence type="ECO:0000255" key="1">
    <source>
        <dbReference type="HAMAP-Rule" id="MF_00191"/>
    </source>
</evidence>